<keyword id="KW-0325">Glycoprotein</keyword>
<keyword id="KW-0449">Lipoprotein</keyword>
<keyword id="KW-0472">Membrane</keyword>
<keyword id="KW-0564">Palmitate</keyword>
<keyword id="KW-0732">Signal</keyword>
<keyword id="KW-0812">Transmembrane</keyword>
<keyword id="KW-1133">Transmembrane helix</keyword>
<keyword id="KW-0261">Viral envelope protein</keyword>
<keyword id="KW-0946">Virion</keyword>
<sequence length="526" mass="59372">MLLQIVLLMSLMVFSPCPGKFPLYTIPDKLGPWSPIDIHHLSCPNNLIVEDEGCTSLSGFSYMELKVGFITTIKVSGFTCTGVVTESETYTNFFGYVTTTFKRKHFRPTPEFCRNAYNWKVAGDPRYEESLHNPYPDYHWLRTVTTTKESLLIISPSVVDMDPYDKSLHSKMFPKGTCSGASVPSIFCSTNHDYTLWMPENPKPGMSCDIFTTSKGKKASKGGKVCGFVDERGLYKSLKGACKLKLCGISGLRLMDGSWVSIQNHEEAKWCSPDQLVNIHDFHSDEIEHLIVEELVRKREECLDALESIMTTKSVSFRRLSHLRKLVPGFGKAYTIVNKTLMEADAHYKSVRTWNEIIPSKGCLKVRERCHPPYNGVFFNGIILSPDGHVLIPEMQSSLLQQHVELLESSVIPLIHPLADPSTVFKRDDEAEDFIEVHLPDVQKQVSGIDLGLSEWERYLIIGASAVVLFALAIIFAVCCRRCKRRKKARTDRIELDRKVSVTSQSGKVIPSWESYKIEAGGHFRS</sequence>
<comment type="function">
    <text evidence="1">Attaches the virus to host cellular receptor, inducing endocytosis of the virion. In the endosome, the acidic pH induces conformational changes in the glycoprotein trimer, which trigger fusion between virus and cell membrane. There is convincing in vitro evidence that the muscular form of the nicotinic acetylcholine receptor (nAChR), the neuronal cell adhesion molecule (NCAM), and the p75 neurotrophin receptor (p75NTR) bind glycoprotein and thereby facilitate rabies virus entry into cells (By similarity).</text>
</comment>
<comment type="subunit">
    <text evidence="1">Homotrimer. Interacts with matrix protein (By similarity).</text>
</comment>
<comment type="subcellular location">
    <subcellularLocation>
        <location evidence="3">Virion membrane</location>
        <topology evidence="3">Single-pass type I membrane protein</topology>
    </subcellularLocation>
</comment>
<comment type="PTM">
    <text evidence="1">Glycosylated and palmitoylated by host. Glycosylation is crucial for glycoprotein export at the cell surface (By similarity).</text>
</comment>
<comment type="biotechnology">
    <text>Primary surface antigen capable of inducing and reacting with virus-neutralizing antibodies. Almost all human and veterinary vaccines are based on the functional aspects of the G protein.</text>
</comment>
<comment type="miscellaneous">
    <text evidence="1">Arg-352 is highly involved in rabies virus pathogenicity. Its mutation dramatically attenuates the virus (By similarity).</text>
</comment>
<comment type="similarity">
    <text evidence="3">Belongs to the lyssavirus glycoprotein family.</text>
</comment>
<accession>Q8JTH0</accession>
<organism>
    <name type="scientific">Australian bat lyssavirus (isolate Human/AUS/1998)</name>
    <name type="common">ABLV</name>
    <dbReference type="NCBI Taxonomy" id="446562"/>
    <lineage>
        <taxon>Viruses</taxon>
        <taxon>Riboviria</taxon>
        <taxon>Orthornavirae</taxon>
        <taxon>Negarnaviricota</taxon>
        <taxon>Haploviricotina</taxon>
        <taxon>Monjiviricetes</taxon>
        <taxon>Mononegavirales</taxon>
        <taxon>Rhabdoviridae</taxon>
        <taxon>Alpharhabdovirinae</taxon>
        <taxon>Lyssavirus</taxon>
        <taxon>Lyssavirus australis</taxon>
    </lineage>
</organism>
<organismHost>
    <name type="scientific">Homo sapiens</name>
    <name type="common">Human</name>
    <dbReference type="NCBI Taxonomy" id="9606"/>
</organismHost>
<organismHost>
    <name type="scientific">Pteropus alecto</name>
    <name type="common">Black flying fox</name>
    <dbReference type="NCBI Taxonomy" id="9402"/>
</organismHost>
<organismHost>
    <name type="scientific">Pteropus conspicillatus</name>
    <name type="common">Spectacled flying fox</name>
    <dbReference type="NCBI Taxonomy" id="328804"/>
</organismHost>
<organismHost>
    <name type="scientific">Pteropus poliocephalus</name>
    <name type="common">Grey-headed flying fox</name>
    <dbReference type="NCBI Taxonomy" id="9403"/>
</organismHost>
<organismHost>
    <name type="scientific">Pteropus scapulatus</name>
    <name type="common">Little red flying fox</name>
    <dbReference type="NCBI Taxonomy" id="94117"/>
</organismHost>
<organismHost>
    <name type="scientific">Saccolaimus</name>
    <dbReference type="NCBI Taxonomy" id="446909"/>
</organismHost>
<protein>
    <recommendedName>
        <fullName>Glycoprotein</fullName>
    </recommendedName>
</protein>
<gene>
    <name type="primary">G</name>
</gene>
<name>GLYCO_ABLVH</name>
<reference key="1">
    <citation type="journal article" date="2002" name="Virology">
        <title>Sequence analysis of an isolate from a fatal human infection of Australian bat lyssavirus.</title>
        <authorList>
            <person name="Warrilow D."/>
            <person name="Smith I.L."/>
            <person name="Harrower B."/>
            <person name="Smith G.A."/>
        </authorList>
    </citation>
    <scope>NUCLEOTIDE SEQUENCE [GENOMIC RNA]</scope>
</reference>
<feature type="signal peptide" evidence="2">
    <location>
        <begin position="1"/>
        <end position="19"/>
    </location>
</feature>
<feature type="chain" id="PRO_0000295793" description="Glycoprotein">
    <location>
        <begin position="20"/>
        <end position="526"/>
    </location>
</feature>
<feature type="topological domain" description="Virion surface" evidence="2">
    <location>
        <begin position="20"/>
        <end position="459"/>
    </location>
</feature>
<feature type="transmembrane region" description="Helical" evidence="2">
    <location>
        <begin position="460"/>
        <end position="480"/>
    </location>
</feature>
<feature type="topological domain" description="Intravirion" evidence="2">
    <location>
        <begin position="481"/>
        <end position="526"/>
    </location>
</feature>
<feature type="lipid moiety-binding region" description="S-palmitoyl cysteine; by host" evidence="1">
    <location>
        <position position="480"/>
    </location>
</feature>
<feature type="glycosylation site" description="N-linked (GlcNAc...) asparagine; by host" evidence="1">
    <location>
        <position position="338"/>
    </location>
</feature>
<proteinExistence type="evidence at protein level"/>
<dbReference type="EMBL" id="AF418014">
    <property type="protein sequence ID" value="AAN05309.1"/>
    <property type="molecule type" value="Genomic_RNA"/>
</dbReference>
<dbReference type="SMR" id="Q8JTH0"/>
<dbReference type="GlyCosmos" id="Q8JTH0">
    <property type="glycosylation" value="1 site, No reported glycans"/>
</dbReference>
<dbReference type="Proteomes" id="UP000006884">
    <property type="component" value="Genome"/>
</dbReference>
<dbReference type="GO" id="GO:0016020">
    <property type="term" value="C:membrane"/>
    <property type="evidence" value="ECO:0007669"/>
    <property type="project" value="UniProtKB-KW"/>
</dbReference>
<dbReference type="GO" id="GO:0019031">
    <property type="term" value="C:viral envelope"/>
    <property type="evidence" value="ECO:0007669"/>
    <property type="project" value="UniProtKB-KW"/>
</dbReference>
<dbReference type="GO" id="GO:0055036">
    <property type="term" value="C:virion membrane"/>
    <property type="evidence" value="ECO:0007669"/>
    <property type="project" value="UniProtKB-SubCell"/>
</dbReference>
<dbReference type="Gene3D" id="2.30.29.130">
    <property type="match status" value="1"/>
</dbReference>
<dbReference type="InterPro" id="IPR055448">
    <property type="entry name" value="PH_Rhabdo_glycop"/>
</dbReference>
<dbReference type="InterPro" id="IPR055447">
    <property type="entry name" value="Rhabdo_glycop_CD"/>
</dbReference>
<dbReference type="InterPro" id="IPR001903">
    <property type="entry name" value="Rhabdo_glycop_FD"/>
</dbReference>
<dbReference type="Pfam" id="PF24834">
    <property type="entry name" value="PH_Rhabdo_glycop"/>
    <property type="match status" value="1"/>
</dbReference>
<dbReference type="Pfam" id="PF24833">
    <property type="entry name" value="Rhabdo_glycop_CD"/>
    <property type="match status" value="1"/>
</dbReference>
<dbReference type="Pfam" id="PF00974">
    <property type="entry name" value="Rhabdo_glycop_FD"/>
    <property type="match status" value="1"/>
</dbReference>
<dbReference type="SUPFAM" id="SSF161008">
    <property type="entry name" value="Viral glycoprotein ectodomain-like"/>
    <property type="match status" value="1"/>
</dbReference>
<evidence type="ECO:0000250" key="1"/>
<evidence type="ECO:0000255" key="2"/>
<evidence type="ECO:0000305" key="3"/>